<comment type="function">
    <text evidence="3">Transcription factor involved in abscisic acid-mediated stomatal closure (PubMed:25005917). Regulates the expression of NCED1, a gene involved in the biosynthesis of abscisic acid (ABA) (PubMed:25005917). Required for the stomatal closure induced by the bacterial pathogen Pseudomonas syringae pv tomato DC3000, but not for stomatal reopening (PubMed:25005917).</text>
</comment>
<comment type="subcellular location">
    <subcellularLocation>
        <location evidence="1 3">Nucleus</location>
    </subcellularLocation>
</comment>
<comment type="tissue specificity">
    <text evidence="3">Expressed in guard cells of the epidermis.</text>
</comment>
<comment type="induction">
    <text evidence="3">Induced by abscisic acid (ABA), dehydration and wounding.</text>
</comment>
<comment type="domain">
    <text evidence="1">The NAC domain includes a DNA binding domain and a dimerization domain.</text>
</comment>
<comment type="miscellaneous">
    <text evidence="3">Plants silencing JA2 exhibit a dwarf phenotype.</text>
</comment>
<accession>Q9SQL0</accession>
<name>JA2_SOLLC</name>
<keyword id="KW-0238">DNA-binding</keyword>
<keyword id="KW-0539">Nucleus</keyword>
<keyword id="KW-1185">Reference proteome</keyword>
<keyword id="KW-0804">Transcription</keyword>
<keyword id="KW-0805">Transcription regulation</keyword>
<reference key="1">
    <citation type="submission" date="1997-07" db="EMBL/GenBank/DDBJ databases">
        <title>Isolation of new regulatory genes specific to the jasmonic acid mediated signalling pathway in plants.</title>
        <authorList>
            <person name="Broday L."/>
            <person name="Lifschitz E."/>
        </authorList>
    </citation>
    <scope>NUCLEOTIDE SEQUENCE [MRNA]</scope>
    <source>
        <strain>cv. Moneymaker</strain>
    </source>
</reference>
<reference key="2">
    <citation type="journal article" date="2012" name="Nature">
        <title>The tomato genome sequence provides insights into fleshy fruit evolution.</title>
        <authorList>
            <consortium name="Tomato Genome Consortium"/>
        </authorList>
    </citation>
    <scope>NUCLEOTIDE SEQUENCE [LARGE SCALE GENOMIC DNA]</scope>
    <source>
        <strain>cv. Heinz 1706</strain>
    </source>
</reference>
<reference key="3">
    <citation type="journal article" date="2014" name="Plant Cell">
        <title>Closely related NAC transcription factors of tomato differentially regulate stomatal closure and reopening during pathogen attack.</title>
        <authorList>
            <person name="Du M."/>
            <person name="Zhai Q."/>
            <person name="Deng L."/>
            <person name="Li S."/>
            <person name="Li H."/>
            <person name="Yan L."/>
            <person name="Huang Z."/>
            <person name="Wang B."/>
            <person name="Jiang H."/>
            <person name="Huang T."/>
            <person name="Li C.B."/>
            <person name="Wei J."/>
            <person name="Kang L."/>
            <person name="Li J."/>
            <person name="Li C."/>
        </authorList>
    </citation>
    <scope>FUNCTION</scope>
    <scope>SUBCELLULAR LOCATION</scope>
    <scope>TISSUE SPECIFICITY</scope>
    <scope>INDUCTION</scope>
</reference>
<gene>
    <name evidence="4" type="primary">JA2</name>
    <name evidence="5" type="synonym">LEJA2</name>
    <name evidence="6" type="ordered locus">Solyc12g013620</name>
</gene>
<sequence length="349" mass="39475">MGVQEKDPLLQLSLPPGFRFYPTDEELLVQYLCKKVAGHDFPLQIIGEIDLYKFDPWVLPSKATFGEKEWYFFSPRDRKYPNGSRPNRVAGSGYWKATGTDKVITSQGRKVGIKKALVFYVGKAPKGSKTNWIMHEYRLFESSRKNNGSSKLDEWVLCRIYKKNSSGPKPLMSGLHSSNEYSHGSSTSSSSQFDDMLESLPEMDDRFSNLPRLNSLKAEKFNLDRLDSANFDWAILAGLKPMPELGPANQAPGVQGQAQGHVNNHIHSDNNNMNFLNDVYAHPPNFRGNTKVESINLDEEVESGKRNQRIDQSSYFQQSLNGFSQAYTNNVDQFGIQCPNQTLNLGFKQ</sequence>
<protein>
    <recommendedName>
        <fullName evidence="6">NAC domain-containing protein JA2</fullName>
    </recommendedName>
    <alternativeName>
        <fullName evidence="4">Protein JASMONIC ACID 2</fullName>
    </alternativeName>
</protein>
<evidence type="ECO:0000255" key="1">
    <source>
        <dbReference type="PROSITE-ProRule" id="PRU00353"/>
    </source>
</evidence>
<evidence type="ECO:0000256" key="2">
    <source>
        <dbReference type="SAM" id="MobiDB-lite"/>
    </source>
</evidence>
<evidence type="ECO:0000269" key="3">
    <source>
    </source>
</evidence>
<evidence type="ECO:0000303" key="4">
    <source>
    </source>
</evidence>
<evidence type="ECO:0000303" key="5">
    <source ref="1"/>
</evidence>
<evidence type="ECO:0000305" key="6"/>
<feature type="chain" id="PRO_0000447553" description="NAC domain-containing protein JA2">
    <location>
        <begin position="1"/>
        <end position="349"/>
    </location>
</feature>
<feature type="domain" description="NAC" evidence="1">
    <location>
        <begin position="14"/>
        <end position="163"/>
    </location>
</feature>
<feature type="DNA-binding region" evidence="1">
    <location>
        <begin position="111"/>
        <end position="169"/>
    </location>
</feature>
<feature type="region of interest" description="Disordered" evidence="2">
    <location>
        <begin position="169"/>
        <end position="194"/>
    </location>
</feature>
<feature type="compositionally biased region" description="Low complexity" evidence="2">
    <location>
        <begin position="177"/>
        <end position="191"/>
    </location>
</feature>
<dbReference type="EMBL" id="AF011555">
    <property type="protein sequence ID" value="AAF04915.1"/>
    <property type="molecule type" value="mRNA"/>
</dbReference>
<dbReference type="EMBL" id="CM001075">
    <property type="status" value="NOT_ANNOTATED_CDS"/>
    <property type="molecule type" value="Genomic_DNA"/>
</dbReference>
<dbReference type="RefSeq" id="NP_001233972.1">
    <property type="nucleotide sequence ID" value="NM_001247043.1"/>
</dbReference>
<dbReference type="SMR" id="Q9SQL0"/>
<dbReference type="FunCoup" id="Q9SQL0">
    <property type="interactions" value="17"/>
</dbReference>
<dbReference type="STRING" id="4081.Q9SQL0"/>
<dbReference type="PaxDb" id="4081-Solyc12g013620.1.1"/>
<dbReference type="EnsemblPlants" id="Solyc12g013620.2.1">
    <property type="protein sequence ID" value="Solyc12g013620.2.1"/>
    <property type="gene ID" value="Solyc12g013620.2"/>
</dbReference>
<dbReference type="GeneID" id="543526"/>
<dbReference type="Gramene" id="Solyc12g013620.2.1">
    <property type="protein sequence ID" value="Solyc12g013620.2.1"/>
    <property type="gene ID" value="Solyc12g013620.2"/>
</dbReference>
<dbReference type="KEGG" id="sly:543526"/>
<dbReference type="eggNOG" id="ENOG502QRBC">
    <property type="taxonomic scope" value="Eukaryota"/>
</dbReference>
<dbReference type="HOGENOM" id="CLU_035664_8_4_1"/>
<dbReference type="InParanoid" id="Q9SQL0"/>
<dbReference type="OMA" id="NEYSHGS"/>
<dbReference type="OrthoDB" id="1921961at2759"/>
<dbReference type="PhylomeDB" id="Q9SQL0"/>
<dbReference type="Proteomes" id="UP000004994">
    <property type="component" value="Chromosome 12"/>
</dbReference>
<dbReference type="GO" id="GO:0005634">
    <property type="term" value="C:nucleus"/>
    <property type="evidence" value="ECO:0007669"/>
    <property type="project" value="UniProtKB-SubCell"/>
</dbReference>
<dbReference type="GO" id="GO:0003677">
    <property type="term" value="F:DNA binding"/>
    <property type="evidence" value="ECO:0007669"/>
    <property type="project" value="UniProtKB-KW"/>
</dbReference>
<dbReference type="GO" id="GO:0006355">
    <property type="term" value="P:regulation of DNA-templated transcription"/>
    <property type="evidence" value="ECO:0007669"/>
    <property type="project" value="InterPro"/>
</dbReference>
<dbReference type="FunFam" id="2.170.150.80:FF:000008">
    <property type="entry name" value="NAC domain-containing protein 72-like"/>
    <property type="match status" value="1"/>
</dbReference>
<dbReference type="Gene3D" id="2.170.150.80">
    <property type="entry name" value="NAC domain"/>
    <property type="match status" value="1"/>
</dbReference>
<dbReference type="InterPro" id="IPR003441">
    <property type="entry name" value="NAC-dom"/>
</dbReference>
<dbReference type="InterPro" id="IPR036093">
    <property type="entry name" value="NAC_dom_sf"/>
</dbReference>
<dbReference type="PANTHER" id="PTHR31744:SF233">
    <property type="entry name" value="NAC DOMAIN-CONTAINING PROTEIN 72-LIKE"/>
    <property type="match status" value="1"/>
</dbReference>
<dbReference type="PANTHER" id="PTHR31744">
    <property type="entry name" value="PROTEIN CUP-SHAPED COTYLEDON 2-RELATED"/>
    <property type="match status" value="1"/>
</dbReference>
<dbReference type="Pfam" id="PF02365">
    <property type="entry name" value="NAM"/>
    <property type="match status" value="1"/>
</dbReference>
<dbReference type="SUPFAM" id="SSF101941">
    <property type="entry name" value="NAC domain"/>
    <property type="match status" value="1"/>
</dbReference>
<dbReference type="PROSITE" id="PS51005">
    <property type="entry name" value="NAC"/>
    <property type="match status" value="1"/>
</dbReference>
<organism>
    <name type="scientific">Solanum lycopersicum</name>
    <name type="common">Tomato</name>
    <name type="synonym">Lycopersicon esculentum</name>
    <dbReference type="NCBI Taxonomy" id="4081"/>
    <lineage>
        <taxon>Eukaryota</taxon>
        <taxon>Viridiplantae</taxon>
        <taxon>Streptophyta</taxon>
        <taxon>Embryophyta</taxon>
        <taxon>Tracheophyta</taxon>
        <taxon>Spermatophyta</taxon>
        <taxon>Magnoliopsida</taxon>
        <taxon>eudicotyledons</taxon>
        <taxon>Gunneridae</taxon>
        <taxon>Pentapetalae</taxon>
        <taxon>asterids</taxon>
        <taxon>lamiids</taxon>
        <taxon>Solanales</taxon>
        <taxon>Solanaceae</taxon>
        <taxon>Solanoideae</taxon>
        <taxon>Solaneae</taxon>
        <taxon>Solanum</taxon>
        <taxon>Solanum subgen. Lycopersicon</taxon>
    </lineage>
</organism>
<proteinExistence type="evidence at transcript level"/>